<protein>
    <recommendedName>
        <fullName>Polyadenylate-binding protein RBP47A</fullName>
        <shortName>Poly(A)-binding protein RBP47A</shortName>
    </recommendedName>
    <alternativeName>
        <fullName>RNA-binding protein 47A</fullName>
        <shortName>AtRBP47A</shortName>
    </alternativeName>
</protein>
<evidence type="ECO:0000250" key="1"/>
<evidence type="ECO:0000255" key="2">
    <source>
        <dbReference type="PROSITE-ProRule" id="PRU00176"/>
    </source>
</evidence>
<evidence type="ECO:0000256" key="3">
    <source>
        <dbReference type="SAM" id="MobiDB-lite"/>
    </source>
</evidence>
<evidence type="ECO:0000269" key="4">
    <source>
    </source>
</evidence>
<evidence type="ECO:0000269" key="5">
    <source>
    </source>
</evidence>
<evidence type="ECO:0000305" key="6"/>
<reference key="1">
    <citation type="journal article" date="2000" name="Nature">
        <title>Sequence and analysis of chromosome 1 of the plant Arabidopsis thaliana.</title>
        <authorList>
            <person name="Theologis A."/>
            <person name="Ecker J.R."/>
            <person name="Palm C.J."/>
            <person name="Federspiel N.A."/>
            <person name="Kaul S."/>
            <person name="White O."/>
            <person name="Alonso J."/>
            <person name="Altafi H."/>
            <person name="Araujo R."/>
            <person name="Bowman C.L."/>
            <person name="Brooks S.Y."/>
            <person name="Buehler E."/>
            <person name="Chan A."/>
            <person name="Chao Q."/>
            <person name="Chen H."/>
            <person name="Cheuk R.F."/>
            <person name="Chin C.W."/>
            <person name="Chung M.K."/>
            <person name="Conn L."/>
            <person name="Conway A.B."/>
            <person name="Conway A.R."/>
            <person name="Creasy T.H."/>
            <person name="Dewar K."/>
            <person name="Dunn P."/>
            <person name="Etgu P."/>
            <person name="Feldblyum T.V."/>
            <person name="Feng J.-D."/>
            <person name="Fong B."/>
            <person name="Fujii C.Y."/>
            <person name="Gill J.E."/>
            <person name="Goldsmith A.D."/>
            <person name="Haas B."/>
            <person name="Hansen N.F."/>
            <person name="Hughes B."/>
            <person name="Huizar L."/>
            <person name="Hunter J.L."/>
            <person name="Jenkins J."/>
            <person name="Johnson-Hopson C."/>
            <person name="Khan S."/>
            <person name="Khaykin E."/>
            <person name="Kim C.J."/>
            <person name="Koo H.L."/>
            <person name="Kremenetskaia I."/>
            <person name="Kurtz D.B."/>
            <person name="Kwan A."/>
            <person name="Lam B."/>
            <person name="Langin-Hooper S."/>
            <person name="Lee A."/>
            <person name="Lee J.M."/>
            <person name="Lenz C.A."/>
            <person name="Li J.H."/>
            <person name="Li Y.-P."/>
            <person name="Lin X."/>
            <person name="Liu S.X."/>
            <person name="Liu Z.A."/>
            <person name="Luros J.S."/>
            <person name="Maiti R."/>
            <person name="Marziali A."/>
            <person name="Militscher J."/>
            <person name="Miranda M."/>
            <person name="Nguyen M."/>
            <person name="Nierman W.C."/>
            <person name="Osborne B.I."/>
            <person name="Pai G."/>
            <person name="Peterson J."/>
            <person name="Pham P.K."/>
            <person name="Rizzo M."/>
            <person name="Rooney T."/>
            <person name="Rowley D."/>
            <person name="Sakano H."/>
            <person name="Salzberg S.L."/>
            <person name="Schwartz J.R."/>
            <person name="Shinn P."/>
            <person name="Southwick A.M."/>
            <person name="Sun H."/>
            <person name="Tallon L.J."/>
            <person name="Tambunga G."/>
            <person name="Toriumi M.J."/>
            <person name="Town C.D."/>
            <person name="Utterback T."/>
            <person name="Van Aken S."/>
            <person name="Vaysberg M."/>
            <person name="Vysotskaia V.S."/>
            <person name="Walker M."/>
            <person name="Wu D."/>
            <person name="Yu G."/>
            <person name="Fraser C.M."/>
            <person name="Venter J.C."/>
            <person name="Davis R.W."/>
        </authorList>
    </citation>
    <scope>NUCLEOTIDE SEQUENCE [LARGE SCALE GENOMIC DNA]</scope>
    <source>
        <strain>cv. Columbia</strain>
    </source>
</reference>
<reference key="2">
    <citation type="journal article" date="2017" name="Plant J.">
        <title>Araport11: a complete reannotation of the Arabidopsis thaliana reference genome.</title>
        <authorList>
            <person name="Cheng C.Y."/>
            <person name="Krishnakumar V."/>
            <person name="Chan A.P."/>
            <person name="Thibaud-Nissen F."/>
            <person name="Schobel S."/>
            <person name="Town C.D."/>
        </authorList>
    </citation>
    <scope>GENOME REANNOTATION</scope>
    <source>
        <strain>cv. Columbia</strain>
    </source>
</reference>
<reference key="3">
    <citation type="journal article" date="2000" name="RNA">
        <title>RBP45 and RBP47, two oligouridylate-specific hnRNP-like proteins interacting with poly(A)+ RNA in nuclei of plant cells.</title>
        <authorList>
            <person name="Lorkovic Z.J."/>
            <person name="Wieczorek Kirk D.A."/>
            <person name="Klahre U."/>
            <person name="Hemmings-Mieszczak M."/>
            <person name="Filipowicz W."/>
        </authorList>
    </citation>
    <scope>TISSUE SPECIFICITY</scope>
    <scope>GENE FAMILY</scope>
    <scope>NOMENCLATURE</scope>
</reference>
<reference key="4">
    <citation type="journal article" date="2011" name="Mol. Cells">
        <title>Phylogenetic and expression analysis of RNA-binding proteins with triple RNA recognition motifs in plants.</title>
        <authorList>
            <person name="Peal L."/>
            <person name="Jambunathan N."/>
            <person name="Mahalingam R."/>
        </authorList>
    </citation>
    <scope>INDUCTION BY OZONE</scope>
    <scope>GENE FAMILY</scope>
    <source>
        <strain>cv. Columbia</strain>
        <strain>cv. Wassilewskija</strain>
    </source>
</reference>
<feature type="chain" id="PRO_0000415766" description="Polyadenylate-binding protein RBP47A">
    <location>
        <begin position="1"/>
        <end position="445"/>
    </location>
</feature>
<feature type="domain" description="RRM 1" evidence="2">
    <location>
        <begin position="119"/>
        <end position="199"/>
    </location>
</feature>
<feature type="domain" description="RRM 2" evidence="2">
    <location>
        <begin position="213"/>
        <end position="292"/>
    </location>
</feature>
<feature type="domain" description="RRM 3" evidence="2">
    <location>
        <begin position="327"/>
        <end position="399"/>
    </location>
</feature>
<feature type="region of interest" description="Disordered" evidence="3">
    <location>
        <begin position="1"/>
        <end position="45"/>
    </location>
</feature>
<feature type="region of interest" description="Disordered" evidence="3">
    <location>
        <begin position="93"/>
        <end position="117"/>
    </location>
</feature>
<feature type="compositionally biased region" description="Polar residues" evidence="3">
    <location>
        <begin position="1"/>
        <end position="12"/>
    </location>
</feature>
<feature type="compositionally biased region" description="Pro residues" evidence="3">
    <location>
        <begin position="22"/>
        <end position="35"/>
    </location>
</feature>
<feature type="compositionally biased region" description="Low complexity" evidence="3">
    <location>
        <begin position="36"/>
        <end position="45"/>
    </location>
</feature>
<feature type="compositionally biased region" description="Low complexity" evidence="3">
    <location>
        <begin position="93"/>
        <end position="108"/>
    </location>
</feature>
<keyword id="KW-0507">mRNA processing</keyword>
<keyword id="KW-0539">Nucleus</keyword>
<keyword id="KW-1185">Reference proteome</keyword>
<keyword id="KW-0677">Repeat</keyword>
<keyword id="KW-0694">RNA-binding</keyword>
<accession>F4I3B3</accession>
<accession>Q9FX88</accession>
<comment type="function">
    <text evidence="1">Heterogeneous nuclear ribonucleoprotein (hnRNP)-protein binding the poly(A) tail of mRNA and probably involved in some steps of pre-mRNA maturation.</text>
</comment>
<comment type="subunit">
    <text evidence="1">Interacts with the poly(A) tail of mRNA in nucleus.</text>
</comment>
<comment type="subcellular location">
    <subcellularLocation>
        <location evidence="1">Nucleus</location>
    </subcellularLocation>
    <subcellularLocation>
        <location evidence="1">Cytoplasmic granule</location>
    </subcellularLocation>
</comment>
<comment type="tissue specificity">
    <text evidence="4">Expressed in leaves, stems, flowers, and seedlings.</text>
</comment>
<comment type="induction">
    <text evidence="5">Repressed by ozone-induced oxidative stress.</text>
</comment>
<comment type="similarity">
    <text evidence="6">Belongs to the polyadenylate-binding RBP47 family.</text>
</comment>
<comment type="sequence caution" evidence="6">
    <conflict type="erroneous gene model prediction">
        <sequence resource="EMBL-CDS" id="AAG13046"/>
    </conflict>
</comment>
<proteinExistence type="evidence at transcript level"/>
<dbReference type="EMBL" id="AC011807">
    <property type="protein sequence ID" value="AAG13046.1"/>
    <property type="status" value="ALT_SEQ"/>
    <property type="molecule type" value="Genomic_DNA"/>
</dbReference>
<dbReference type="EMBL" id="CP002684">
    <property type="protein sequence ID" value="AEE32448.1"/>
    <property type="molecule type" value="Genomic_DNA"/>
</dbReference>
<dbReference type="PIR" id="F96532">
    <property type="entry name" value="F96532"/>
</dbReference>
<dbReference type="RefSeq" id="NP_175383.1">
    <property type="nucleotide sequence ID" value="NM_103848.3"/>
</dbReference>
<dbReference type="SMR" id="F4I3B3"/>
<dbReference type="BioGRID" id="26609">
    <property type="interactions" value="1"/>
</dbReference>
<dbReference type="FunCoup" id="F4I3B3">
    <property type="interactions" value="470"/>
</dbReference>
<dbReference type="IntAct" id="F4I3B3">
    <property type="interactions" value="1"/>
</dbReference>
<dbReference type="STRING" id="3702.F4I3B3"/>
<dbReference type="GlyGen" id="F4I3B3">
    <property type="glycosylation" value="2 sites, 1 O-linked glycan (2 sites)"/>
</dbReference>
<dbReference type="iPTMnet" id="F4I3B3"/>
<dbReference type="PaxDb" id="3702-AT1G49600.1"/>
<dbReference type="ProteomicsDB" id="236210"/>
<dbReference type="EnsemblPlants" id="AT1G49600.1">
    <property type="protein sequence ID" value="AT1G49600.1"/>
    <property type="gene ID" value="AT1G49600"/>
</dbReference>
<dbReference type="GeneID" id="841384"/>
<dbReference type="Gramene" id="AT1G49600.1">
    <property type="protein sequence ID" value="AT1G49600.1"/>
    <property type="gene ID" value="AT1G49600"/>
</dbReference>
<dbReference type="KEGG" id="ath:AT1G49600"/>
<dbReference type="Araport" id="AT1G49600"/>
<dbReference type="TAIR" id="AT1G49600">
    <property type="gene designation" value="RBP47A"/>
</dbReference>
<dbReference type="eggNOG" id="KOG0118">
    <property type="taxonomic scope" value="Eukaryota"/>
</dbReference>
<dbReference type="HOGENOM" id="CLU_016304_2_1_1"/>
<dbReference type="InParanoid" id="F4I3B3"/>
<dbReference type="OMA" id="YPSCHSA"/>
<dbReference type="OrthoDB" id="446113at2759"/>
<dbReference type="PRO" id="PR:F4I3B3"/>
<dbReference type="Proteomes" id="UP000006548">
    <property type="component" value="Chromosome 1"/>
</dbReference>
<dbReference type="ExpressionAtlas" id="F4I3B3">
    <property type="expression patterns" value="baseline and differential"/>
</dbReference>
<dbReference type="GO" id="GO:0010494">
    <property type="term" value="C:cytoplasmic stress granule"/>
    <property type="evidence" value="ECO:0000250"/>
    <property type="project" value="UniProtKB"/>
</dbReference>
<dbReference type="GO" id="GO:0005634">
    <property type="term" value="C:nucleus"/>
    <property type="evidence" value="ECO:0000250"/>
    <property type="project" value="UniProtKB"/>
</dbReference>
<dbReference type="GO" id="GO:0003729">
    <property type="term" value="F:mRNA binding"/>
    <property type="evidence" value="ECO:0000314"/>
    <property type="project" value="TAIR"/>
</dbReference>
<dbReference type="GO" id="GO:0008143">
    <property type="term" value="F:poly(A) binding"/>
    <property type="evidence" value="ECO:0000250"/>
    <property type="project" value="UniProtKB"/>
</dbReference>
<dbReference type="GO" id="GO:0034605">
    <property type="term" value="P:cellular response to heat"/>
    <property type="evidence" value="ECO:0000250"/>
    <property type="project" value="UniProtKB"/>
</dbReference>
<dbReference type="GO" id="GO:0006397">
    <property type="term" value="P:mRNA processing"/>
    <property type="evidence" value="ECO:0007669"/>
    <property type="project" value="UniProtKB-KW"/>
</dbReference>
<dbReference type="CDD" id="cd12344">
    <property type="entry name" value="RRM1_SECp43_like"/>
    <property type="match status" value="1"/>
</dbReference>
<dbReference type="CDD" id="cd12345">
    <property type="entry name" value="RRM2_SECp43_like"/>
    <property type="match status" value="1"/>
</dbReference>
<dbReference type="FunFam" id="3.30.70.330:FF:000395">
    <property type="entry name" value="Polyadenylate-binding protein RBP47"/>
    <property type="match status" value="1"/>
</dbReference>
<dbReference type="FunFam" id="3.30.70.330:FF:000737">
    <property type="entry name" value="polyadenylate-binding protein RBP47 isoform X2"/>
    <property type="match status" value="1"/>
</dbReference>
<dbReference type="FunFam" id="3.30.70.330:FF:000144">
    <property type="entry name" value="Polyadenylate-binding protein RBP47B"/>
    <property type="match status" value="1"/>
</dbReference>
<dbReference type="Gene3D" id="3.30.70.330">
    <property type="match status" value="3"/>
</dbReference>
<dbReference type="InterPro" id="IPR012677">
    <property type="entry name" value="Nucleotide-bd_a/b_plait_sf"/>
</dbReference>
<dbReference type="InterPro" id="IPR035979">
    <property type="entry name" value="RBD_domain_sf"/>
</dbReference>
<dbReference type="InterPro" id="IPR050825">
    <property type="entry name" value="RBM42_RBP45_47-like"/>
</dbReference>
<dbReference type="InterPro" id="IPR000504">
    <property type="entry name" value="RRM_dom"/>
</dbReference>
<dbReference type="PANTHER" id="PTHR47640:SF31">
    <property type="entry name" value="POLYADENYLATE-BINDING PROTEIN RBP47A"/>
    <property type="match status" value="1"/>
</dbReference>
<dbReference type="PANTHER" id="PTHR47640">
    <property type="entry name" value="TRNA SELENOCYSTEINE 1-ASSOCIATED PROTEIN 1-RELATED-RELATED"/>
    <property type="match status" value="1"/>
</dbReference>
<dbReference type="Pfam" id="PF00076">
    <property type="entry name" value="RRM_1"/>
    <property type="match status" value="3"/>
</dbReference>
<dbReference type="SMART" id="SM00360">
    <property type="entry name" value="RRM"/>
    <property type="match status" value="3"/>
</dbReference>
<dbReference type="SUPFAM" id="SSF54928">
    <property type="entry name" value="RNA-binding domain, RBD"/>
    <property type="match status" value="2"/>
</dbReference>
<dbReference type="PROSITE" id="PS50102">
    <property type="entry name" value="RRM"/>
    <property type="match status" value="3"/>
</dbReference>
<name>RB47A_ARATH</name>
<organism>
    <name type="scientific">Arabidopsis thaliana</name>
    <name type="common">Mouse-ear cress</name>
    <dbReference type="NCBI Taxonomy" id="3702"/>
    <lineage>
        <taxon>Eukaryota</taxon>
        <taxon>Viridiplantae</taxon>
        <taxon>Streptophyta</taxon>
        <taxon>Embryophyta</taxon>
        <taxon>Tracheophyta</taxon>
        <taxon>Spermatophyta</taxon>
        <taxon>Magnoliopsida</taxon>
        <taxon>eudicotyledons</taxon>
        <taxon>Gunneridae</taxon>
        <taxon>Pentapetalae</taxon>
        <taxon>rosids</taxon>
        <taxon>malvids</taxon>
        <taxon>Brassicales</taxon>
        <taxon>Brassicaceae</taxon>
        <taxon>Camelineae</taxon>
        <taxon>Arabidopsis</taxon>
    </lineage>
</organism>
<gene>
    <name type="primary">RBP47A</name>
    <name type="ordered locus">At1g49600</name>
    <name type="ORF">F14J22.16</name>
</gene>
<sequence>MQTPNNNGSTDSVLPPTSAGTTPPPPLQQSTPPPQQQQQQQWQQQQQWMAAMQQYPAAAMAMMQQQQMMMYPHPQYAPYNQAAYQQHPQFQYAAYQQQQQQHHQSQQQPRGGSGGDDVKTLWVGDLLHWMDETYLHTCFSHTNEVSSVKVIRNKQTCQSEGYGFVEFLSRSAAEEALQSFSGVTMPNAEQPFRLNWASFSTGEKRASENGPDLSIFVGDLAPDVSDAVLLETFAGRYPSVKGAKVVIDSNTGRSKGYGFVRFGDENERSRAMTEMNGAFCSSRQMRVGIATPKRAAAYGQQNGSQALTLAGGHGGNGSMSDGESNNSTIFVGGLDADVTEEDLMQPFSDFGEVVSVKIPVGKGCGFVQFANRQSAEEAIGNLNGTVIGKNTVRLSWGRSPNKQWRSDSGNQWNGGYSRGQGYNNGYANQDSNMYATAAAAVPGAS</sequence>